<dbReference type="EMBL" id="AF147262">
    <property type="protein sequence ID" value="AAD48947.1"/>
    <property type="molecule type" value="Genomic_DNA"/>
</dbReference>
<dbReference type="EMBL" id="AL161505">
    <property type="protein sequence ID" value="CAB81110.1"/>
    <property type="molecule type" value="Genomic_DNA"/>
</dbReference>
<dbReference type="EMBL" id="CP002687">
    <property type="protein sequence ID" value="AEE82565.1"/>
    <property type="molecule type" value="Genomic_DNA"/>
</dbReference>
<dbReference type="PIR" id="B85072">
    <property type="entry name" value="B85072"/>
</dbReference>
<dbReference type="RefSeq" id="NP_567316.1">
    <property type="nucleotide sequence ID" value="NM_116812.2"/>
</dbReference>
<dbReference type="SMR" id="Q9S9X4"/>
<dbReference type="BioGRID" id="11477">
    <property type="interactions" value="1"/>
</dbReference>
<dbReference type="FunCoup" id="Q9S9X4">
    <property type="interactions" value="297"/>
</dbReference>
<dbReference type="STRING" id="3702.Q9S9X4"/>
<dbReference type="iPTMnet" id="Q9S9X4"/>
<dbReference type="PaxDb" id="3702-AT4G07400.1"/>
<dbReference type="EnsemblPlants" id="AT4G07400.1">
    <property type="protein sequence ID" value="AT4G07400.1"/>
    <property type="gene ID" value="AT4G07400"/>
</dbReference>
<dbReference type="GeneID" id="826171"/>
<dbReference type="Gramene" id="AT4G07400.1">
    <property type="protein sequence ID" value="AT4G07400.1"/>
    <property type="gene ID" value="AT4G07400"/>
</dbReference>
<dbReference type="KEGG" id="ath:AT4G07400"/>
<dbReference type="Araport" id="AT4G07400"/>
<dbReference type="TAIR" id="AT4G07400">
    <property type="gene designation" value="VFB3"/>
</dbReference>
<dbReference type="eggNOG" id="KOG1947">
    <property type="taxonomic scope" value="Eukaryota"/>
</dbReference>
<dbReference type="HOGENOM" id="CLU_016072_4_0_1"/>
<dbReference type="InParanoid" id="Q9S9X4"/>
<dbReference type="OMA" id="RREHCEP"/>
<dbReference type="PhylomeDB" id="Q9S9X4"/>
<dbReference type="PRO" id="PR:Q9S9X4"/>
<dbReference type="Proteomes" id="UP000006548">
    <property type="component" value="Chromosome 4"/>
</dbReference>
<dbReference type="ExpressionAtlas" id="Q9S9X4">
    <property type="expression patterns" value="baseline and differential"/>
</dbReference>
<dbReference type="GO" id="GO:0004842">
    <property type="term" value="F:ubiquitin-protein transferase activity"/>
    <property type="evidence" value="ECO:0000250"/>
    <property type="project" value="TAIR"/>
</dbReference>
<dbReference type="CDD" id="cd22159">
    <property type="entry name" value="F-box_AtTIR1-like"/>
    <property type="match status" value="1"/>
</dbReference>
<dbReference type="FunFam" id="1.20.1280.50:FF:000023">
    <property type="entry name" value="F-box/LRR-repeat protein 4"/>
    <property type="match status" value="1"/>
</dbReference>
<dbReference type="FunFam" id="3.80.10.10:FF:001170">
    <property type="entry name" value="Predicted protein"/>
    <property type="match status" value="1"/>
</dbReference>
<dbReference type="FunFam" id="3.80.10.10:FF:001403">
    <property type="entry name" value="Predicted protein"/>
    <property type="match status" value="1"/>
</dbReference>
<dbReference type="Gene3D" id="1.20.1280.50">
    <property type="match status" value="1"/>
</dbReference>
<dbReference type="Gene3D" id="3.80.10.10">
    <property type="entry name" value="Ribonuclease Inhibitor"/>
    <property type="match status" value="2"/>
</dbReference>
<dbReference type="InterPro" id="IPR036047">
    <property type="entry name" value="F-box-like_dom_sf"/>
</dbReference>
<dbReference type="InterPro" id="IPR001810">
    <property type="entry name" value="F-box_dom"/>
</dbReference>
<dbReference type="InterPro" id="IPR001611">
    <property type="entry name" value="Leu-rich_rpt"/>
</dbReference>
<dbReference type="InterPro" id="IPR006553">
    <property type="entry name" value="Leu-rich_rpt_Cys-con_subtyp"/>
</dbReference>
<dbReference type="InterPro" id="IPR032675">
    <property type="entry name" value="LRR_dom_sf"/>
</dbReference>
<dbReference type="PANTHER" id="PTHR13318:SF92">
    <property type="entry name" value="F-BOX_LRR-REPEAT PROTEIN 8-RELATED"/>
    <property type="match status" value="1"/>
</dbReference>
<dbReference type="PANTHER" id="PTHR13318">
    <property type="entry name" value="PARTNER OF PAIRED, ISOFORM B-RELATED"/>
    <property type="match status" value="1"/>
</dbReference>
<dbReference type="Pfam" id="PF12937">
    <property type="entry name" value="F-box-like"/>
    <property type="match status" value="1"/>
</dbReference>
<dbReference type="Pfam" id="PF13516">
    <property type="entry name" value="LRR_6"/>
    <property type="match status" value="2"/>
</dbReference>
<dbReference type="SMART" id="SM00256">
    <property type="entry name" value="FBOX"/>
    <property type="match status" value="1"/>
</dbReference>
<dbReference type="SMART" id="SM00367">
    <property type="entry name" value="LRR_CC"/>
    <property type="match status" value="6"/>
</dbReference>
<dbReference type="SUPFAM" id="SSF81383">
    <property type="entry name" value="F-box domain"/>
    <property type="match status" value="1"/>
</dbReference>
<dbReference type="SUPFAM" id="SSF52047">
    <property type="entry name" value="RNI-like"/>
    <property type="match status" value="1"/>
</dbReference>
<dbReference type="PROSITE" id="PS50181">
    <property type="entry name" value="FBOX"/>
    <property type="match status" value="1"/>
</dbReference>
<accession>Q9S9X4</accession>
<proteinExistence type="predicted"/>
<sequence>MNIYIFSKEKKRKKVVCDNLSKTRGSRREHCEPHRRRMGQSTSKFRRSKTTFTSPVLPNLREQNSGADEPYDYISNLPDECLSLIFQSLTCADLKRCSLVCRRWLTIEGQCRHRLSLKAQSDLISVIPSLFTRFDSVTKLVLRSDRRSLGICDNAFVMISVRCRNLTRLKLRGCPEISDLGIIGFTENCRSLKKVSFGSCGFGVKGMNALLNTCLGLEELSVKRLRGIGAGAELIGPGGAAGSLKVICLKELHNGQCFAPLLSGAKGLRILKIFRCSGDWDRVFEAVRDKVNAIVEIHLERIQMSDLGLTALSKCSGVEVLHLVKTPDCTNVGLALVAERCKLLRKLHIDGWKTNRIGDEGLIVVAKYCWNLQELVLIGVNPTKLSLEAIVSNCLNLERLALCGSDTVGDTELCCIAEKCLALRKLCIKNCPITDDGIKALGNGCPNLLKVKVKKCRGVTTQGADLLRKRRALLVVNLDAPETPIVEGSVGEGGAQENAVEFPPSRLQIPTIGLASGSTSRSSSFKLRLGFLSQRNFVSCALRRLGSRSRSRNE</sequence>
<organism>
    <name type="scientific">Arabidopsis thaliana</name>
    <name type="common">Mouse-ear cress</name>
    <dbReference type="NCBI Taxonomy" id="3702"/>
    <lineage>
        <taxon>Eukaryota</taxon>
        <taxon>Viridiplantae</taxon>
        <taxon>Streptophyta</taxon>
        <taxon>Embryophyta</taxon>
        <taxon>Tracheophyta</taxon>
        <taxon>Spermatophyta</taxon>
        <taxon>Magnoliopsida</taxon>
        <taxon>eudicotyledons</taxon>
        <taxon>Gunneridae</taxon>
        <taxon>Pentapetalae</taxon>
        <taxon>rosids</taxon>
        <taxon>malvids</taxon>
        <taxon>Brassicales</taxon>
        <taxon>Brassicaceae</taxon>
        <taxon>Camelineae</taxon>
        <taxon>Arabidopsis</taxon>
    </lineage>
</organism>
<keyword id="KW-0433">Leucine-rich repeat</keyword>
<keyword id="KW-1185">Reference proteome</keyword>
<keyword id="KW-0677">Repeat</keyword>
<name>FBL8_ARATH</name>
<gene>
    <name type="primary">FBL8</name>
    <name type="synonym">FBL24</name>
    <name type="ordered locus">At4g07400</name>
    <name type="ORF">F28D6.13</name>
</gene>
<feature type="chain" id="PRO_0000272249" description="Putative F-box/LRR-repeat protein 8">
    <location>
        <begin position="1"/>
        <end position="554"/>
    </location>
</feature>
<feature type="domain" description="F-box" evidence="1">
    <location>
        <begin position="71"/>
        <end position="117"/>
    </location>
</feature>
<feature type="repeat" description="LRR 1">
    <location>
        <begin position="119"/>
        <end position="144"/>
    </location>
</feature>
<feature type="repeat" description="LRR 2">
    <location>
        <begin position="148"/>
        <end position="173"/>
    </location>
</feature>
<feature type="repeat" description="LRR 3">
    <location>
        <begin position="174"/>
        <end position="199"/>
    </location>
</feature>
<feature type="repeat" description="LRR 4">
    <location>
        <begin position="205"/>
        <end position="224"/>
    </location>
</feature>
<feature type="repeat" description="LRR 5">
    <location>
        <begin position="250"/>
        <end position="275"/>
    </location>
</feature>
<feature type="repeat" description="LRR 6">
    <location>
        <begin position="301"/>
        <end position="325"/>
    </location>
</feature>
<feature type="repeat" description="LRR 7">
    <location>
        <begin position="326"/>
        <end position="351"/>
    </location>
</feature>
<feature type="repeat" description="LRR 8">
    <location>
        <begin position="354"/>
        <end position="379"/>
    </location>
</feature>
<feature type="repeat" description="LRR 9">
    <location>
        <begin position="383"/>
        <end position="404"/>
    </location>
</feature>
<feature type="repeat" description="LRR 10">
    <location>
        <begin position="405"/>
        <end position="428"/>
    </location>
</feature>
<feature type="repeat" description="LRR 11">
    <location>
        <begin position="430"/>
        <end position="455"/>
    </location>
</feature>
<feature type="repeat" description="LRR 12">
    <location>
        <begin position="456"/>
        <end position="480"/>
    </location>
</feature>
<reference key="1">
    <citation type="journal article" date="1999" name="Nature">
        <title>Sequence and analysis of chromosome 4 of the plant Arabidopsis thaliana.</title>
        <authorList>
            <person name="Mayer K.F.X."/>
            <person name="Schueller C."/>
            <person name="Wambutt R."/>
            <person name="Murphy G."/>
            <person name="Volckaert G."/>
            <person name="Pohl T."/>
            <person name="Duesterhoeft A."/>
            <person name="Stiekema W."/>
            <person name="Entian K.-D."/>
            <person name="Terryn N."/>
            <person name="Harris B."/>
            <person name="Ansorge W."/>
            <person name="Brandt P."/>
            <person name="Grivell L.A."/>
            <person name="Rieger M."/>
            <person name="Weichselgartner M."/>
            <person name="de Simone V."/>
            <person name="Obermaier B."/>
            <person name="Mache R."/>
            <person name="Mueller M."/>
            <person name="Kreis M."/>
            <person name="Delseny M."/>
            <person name="Puigdomenech P."/>
            <person name="Watson M."/>
            <person name="Schmidtheini T."/>
            <person name="Reichert B."/>
            <person name="Portetelle D."/>
            <person name="Perez-Alonso M."/>
            <person name="Boutry M."/>
            <person name="Bancroft I."/>
            <person name="Vos P."/>
            <person name="Hoheisel J."/>
            <person name="Zimmermann W."/>
            <person name="Wedler H."/>
            <person name="Ridley P."/>
            <person name="Langham S.-A."/>
            <person name="McCullagh B."/>
            <person name="Bilham L."/>
            <person name="Robben J."/>
            <person name="van der Schueren J."/>
            <person name="Grymonprez B."/>
            <person name="Chuang Y.-J."/>
            <person name="Vandenbussche F."/>
            <person name="Braeken M."/>
            <person name="Weltjens I."/>
            <person name="Voet M."/>
            <person name="Bastiaens I."/>
            <person name="Aert R."/>
            <person name="Defoor E."/>
            <person name="Weitzenegger T."/>
            <person name="Bothe G."/>
            <person name="Ramsperger U."/>
            <person name="Hilbert H."/>
            <person name="Braun M."/>
            <person name="Holzer E."/>
            <person name="Brandt A."/>
            <person name="Peters S."/>
            <person name="van Staveren M."/>
            <person name="Dirkse W."/>
            <person name="Mooijman P."/>
            <person name="Klein Lankhorst R."/>
            <person name="Rose M."/>
            <person name="Hauf J."/>
            <person name="Koetter P."/>
            <person name="Berneiser S."/>
            <person name="Hempel S."/>
            <person name="Feldpausch M."/>
            <person name="Lamberth S."/>
            <person name="Van den Daele H."/>
            <person name="De Keyser A."/>
            <person name="Buysshaert C."/>
            <person name="Gielen J."/>
            <person name="Villarroel R."/>
            <person name="De Clercq R."/>
            <person name="van Montagu M."/>
            <person name="Rogers J."/>
            <person name="Cronin A."/>
            <person name="Quail M.A."/>
            <person name="Bray-Allen S."/>
            <person name="Clark L."/>
            <person name="Doggett J."/>
            <person name="Hall S."/>
            <person name="Kay M."/>
            <person name="Lennard N."/>
            <person name="McLay K."/>
            <person name="Mayes R."/>
            <person name="Pettett A."/>
            <person name="Rajandream M.A."/>
            <person name="Lyne M."/>
            <person name="Benes V."/>
            <person name="Rechmann S."/>
            <person name="Borkova D."/>
            <person name="Bloecker H."/>
            <person name="Scharfe M."/>
            <person name="Grimm M."/>
            <person name="Loehnert T.-H."/>
            <person name="Dose S."/>
            <person name="de Haan M."/>
            <person name="Maarse A.C."/>
            <person name="Schaefer M."/>
            <person name="Mueller-Auer S."/>
            <person name="Gabel C."/>
            <person name="Fuchs M."/>
            <person name="Fartmann B."/>
            <person name="Granderath K."/>
            <person name="Dauner D."/>
            <person name="Herzl A."/>
            <person name="Neumann S."/>
            <person name="Argiriou A."/>
            <person name="Vitale D."/>
            <person name="Liguori R."/>
            <person name="Piravandi E."/>
            <person name="Massenet O."/>
            <person name="Quigley F."/>
            <person name="Clabauld G."/>
            <person name="Muendlein A."/>
            <person name="Felber R."/>
            <person name="Schnabl S."/>
            <person name="Hiller R."/>
            <person name="Schmidt W."/>
            <person name="Lecharny A."/>
            <person name="Aubourg S."/>
            <person name="Chefdor F."/>
            <person name="Cooke R."/>
            <person name="Berger C."/>
            <person name="Monfort A."/>
            <person name="Casacuberta E."/>
            <person name="Gibbons T."/>
            <person name="Weber N."/>
            <person name="Vandenbol M."/>
            <person name="Bargues M."/>
            <person name="Terol J."/>
            <person name="Torres A."/>
            <person name="Perez-Perez A."/>
            <person name="Purnelle B."/>
            <person name="Bent E."/>
            <person name="Johnson S."/>
            <person name="Tacon D."/>
            <person name="Jesse T."/>
            <person name="Heijnen L."/>
            <person name="Schwarz S."/>
            <person name="Scholler P."/>
            <person name="Heber S."/>
            <person name="Francs P."/>
            <person name="Bielke C."/>
            <person name="Frishman D."/>
            <person name="Haase D."/>
            <person name="Lemcke K."/>
            <person name="Mewes H.-W."/>
            <person name="Stocker S."/>
            <person name="Zaccaria P."/>
            <person name="Bevan M."/>
            <person name="Wilson R.K."/>
            <person name="de la Bastide M."/>
            <person name="Habermann K."/>
            <person name="Parnell L."/>
            <person name="Dedhia N."/>
            <person name="Gnoj L."/>
            <person name="Schutz K."/>
            <person name="Huang E."/>
            <person name="Spiegel L."/>
            <person name="Sekhon M."/>
            <person name="Murray J."/>
            <person name="Sheet P."/>
            <person name="Cordes M."/>
            <person name="Abu-Threideh J."/>
            <person name="Stoneking T."/>
            <person name="Kalicki J."/>
            <person name="Graves T."/>
            <person name="Harmon G."/>
            <person name="Edwards J."/>
            <person name="Latreille P."/>
            <person name="Courtney L."/>
            <person name="Cloud J."/>
            <person name="Abbott A."/>
            <person name="Scott K."/>
            <person name="Johnson D."/>
            <person name="Minx P."/>
            <person name="Bentley D."/>
            <person name="Fulton B."/>
            <person name="Miller N."/>
            <person name="Greco T."/>
            <person name="Kemp K."/>
            <person name="Kramer J."/>
            <person name="Fulton L."/>
            <person name="Mardis E."/>
            <person name="Dante M."/>
            <person name="Pepin K."/>
            <person name="Hillier L.W."/>
            <person name="Nelson J."/>
            <person name="Spieth J."/>
            <person name="Ryan E."/>
            <person name="Andrews S."/>
            <person name="Geisel C."/>
            <person name="Layman D."/>
            <person name="Du H."/>
            <person name="Ali J."/>
            <person name="Berghoff A."/>
            <person name="Jones K."/>
            <person name="Drone K."/>
            <person name="Cotton M."/>
            <person name="Joshu C."/>
            <person name="Antonoiu B."/>
            <person name="Zidanic M."/>
            <person name="Strong C."/>
            <person name="Sun H."/>
            <person name="Lamar B."/>
            <person name="Yordan C."/>
            <person name="Ma P."/>
            <person name="Zhong J."/>
            <person name="Preston R."/>
            <person name="Vil D."/>
            <person name="Shekher M."/>
            <person name="Matero A."/>
            <person name="Shah R."/>
            <person name="Swaby I.K."/>
            <person name="O'Shaughnessy A."/>
            <person name="Rodriguez M."/>
            <person name="Hoffman J."/>
            <person name="Till S."/>
            <person name="Granat S."/>
            <person name="Shohdy N."/>
            <person name="Hasegawa A."/>
            <person name="Hameed A."/>
            <person name="Lodhi M."/>
            <person name="Johnson A."/>
            <person name="Chen E."/>
            <person name="Marra M.A."/>
            <person name="Martienssen R."/>
            <person name="McCombie W.R."/>
        </authorList>
    </citation>
    <scope>NUCLEOTIDE SEQUENCE [LARGE SCALE GENOMIC DNA]</scope>
    <source>
        <strain>cv. Columbia</strain>
    </source>
</reference>
<reference key="2">
    <citation type="journal article" date="2017" name="Plant J.">
        <title>Araport11: a complete reannotation of the Arabidopsis thaliana reference genome.</title>
        <authorList>
            <person name="Cheng C.Y."/>
            <person name="Krishnakumar V."/>
            <person name="Chan A.P."/>
            <person name="Thibaud-Nissen F."/>
            <person name="Schobel S."/>
            <person name="Town C.D."/>
        </authorList>
    </citation>
    <scope>GENOME REANNOTATION</scope>
    <source>
        <strain>cv. Columbia</strain>
    </source>
</reference>
<reference key="3">
    <citation type="journal article" date="2000" name="Trends Plant Sci.">
        <title>F-box proteins in Arabidopsis.</title>
        <authorList>
            <person name="Xiao W."/>
            <person name="Jang J.-C."/>
        </authorList>
    </citation>
    <scope>GENE FAMILY</scope>
    <scope>NOMENCLATURE</scope>
</reference>
<protein>
    <recommendedName>
        <fullName>Putative F-box/LRR-repeat protein 8</fullName>
    </recommendedName>
</protein>
<evidence type="ECO:0000255" key="1">
    <source>
        <dbReference type="PROSITE-ProRule" id="PRU00080"/>
    </source>
</evidence>